<sequence>MNSNISAQNDSALNSTIQNGTKINQFIQPPWQIALWSVAYSIIVIVSLVGNIIVMWIIIAHKRMRTVTNYFLVNLAFAEASMSAFNTVINFTYAIHNHWYYGLIYCKFHNFFPISAVFTSIYSMTAIALDRYMAIIHPLKPRLSATATKIVICVIWSFSFCMAFPLGYYADVYPMEGGDICYLNWPDSEENRKYEQVYQVLVFCLIYILPLLVIGCAYTFIGMTLWASEIPGDSSDRYHEQVVAKRKVVKMMIVVVCTFAICWLPFHIFFLLQTLHEMTQKFYQQFYLAIMWLAMSSTMYNPIIYCCLNDRFRIGFKHVFRWCPFIRAGEYEGLELKSTRYLQTQSSMYKISRIETTVSSVLNTNDEEAEENGKSSKRLSLDLTSNGSSRSVCKTMSDSSSFYSNNLA</sequence>
<comment type="function">
    <text>This is a receptor for the tachykinin neuropeptide substance P. It is probably associated with G proteins that activate a phosphatidylinositol-calcium second messenger system.</text>
</comment>
<comment type="subcellular location">
    <subcellularLocation>
        <location>Cell membrane</location>
        <topology>Multi-pass membrane protein</topology>
    </subcellularLocation>
</comment>
<comment type="similarity">
    <text evidence="2">Belongs to the G-protein coupled receptor 1 family.</text>
</comment>
<accession>Q98982</accession>
<name>NK1R_AQUCT</name>
<feature type="chain" id="PRO_0000069889" description="Substance-P receptor">
    <location>
        <begin position="1"/>
        <end position="408"/>
    </location>
</feature>
<feature type="topological domain" description="Extracellular" evidence="1">
    <location>
        <begin position="1"/>
        <end position="32"/>
    </location>
</feature>
<feature type="transmembrane region" description="Helical; Name=1" evidence="1">
    <location>
        <begin position="33"/>
        <end position="55"/>
    </location>
</feature>
<feature type="topological domain" description="Cytoplasmic" evidence="1">
    <location>
        <begin position="56"/>
        <end position="65"/>
    </location>
</feature>
<feature type="transmembrane region" description="Helical; Name=2" evidence="1">
    <location>
        <begin position="66"/>
        <end position="87"/>
    </location>
</feature>
<feature type="topological domain" description="Extracellular" evidence="1">
    <location>
        <begin position="88"/>
        <end position="107"/>
    </location>
</feature>
<feature type="transmembrane region" description="Helical; Name=3" evidence="1">
    <location>
        <begin position="108"/>
        <end position="129"/>
    </location>
</feature>
<feature type="topological domain" description="Cytoplasmic" evidence="1">
    <location>
        <begin position="130"/>
        <end position="149"/>
    </location>
</feature>
<feature type="transmembrane region" description="Helical; Name=4" evidence="1">
    <location>
        <begin position="150"/>
        <end position="170"/>
    </location>
</feature>
<feature type="topological domain" description="Extracellular" evidence="1">
    <location>
        <begin position="171"/>
        <end position="196"/>
    </location>
</feature>
<feature type="transmembrane region" description="Helical; Name=5" evidence="1">
    <location>
        <begin position="197"/>
        <end position="221"/>
    </location>
</feature>
<feature type="topological domain" description="Cytoplasmic" evidence="1">
    <location>
        <begin position="222"/>
        <end position="250"/>
    </location>
</feature>
<feature type="transmembrane region" description="Helical; Name=6" evidence="1">
    <location>
        <begin position="251"/>
        <end position="272"/>
    </location>
</feature>
<feature type="topological domain" description="Extracellular" evidence="1">
    <location>
        <begin position="273"/>
        <end position="283"/>
    </location>
</feature>
<feature type="transmembrane region" description="Helical; Name=7" evidence="1">
    <location>
        <begin position="284"/>
        <end position="308"/>
    </location>
</feature>
<feature type="topological domain" description="Cytoplasmic" evidence="1">
    <location>
        <begin position="309"/>
        <end position="408"/>
    </location>
</feature>
<feature type="region of interest" description="Disordered" evidence="3">
    <location>
        <begin position="366"/>
        <end position="408"/>
    </location>
</feature>
<feature type="compositionally biased region" description="Polar residues" evidence="3">
    <location>
        <begin position="382"/>
        <end position="408"/>
    </location>
</feature>
<feature type="lipid moiety-binding region" description="S-palmitoyl cysteine" evidence="1">
    <location>
        <position position="323"/>
    </location>
</feature>
<feature type="glycosylation site" description="N-linked (GlcNAc...) asparagine" evidence="1">
    <location>
        <position position="4"/>
    </location>
</feature>
<feature type="glycosylation site" description="N-linked (GlcNAc...) asparagine" evidence="1">
    <location>
        <position position="9"/>
    </location>
</feature>
<feature type="glycosylation site" description="N-linked (GlcNAc...) asparagine" evidence="1">
    <location>
        <position position="14"/>
    </location>
</feature>
<feature type="glycosylation site" description="N-linked (GlcNAc...) asparagine" evidence="1">
    <location>
        <position position="19"/>
    </location>
</feature>
<feature type="disulfide bond" evidence="2">
    <location>
        <begin position="106"/>
        <end position="181"/>
    </location>
</feature>
<dbReference type="EMBL" id="U67736">
    <property type="protein sequence ID" value="AAC05707.1"/>
    <property type="molecule type" value="mRNA"/>
</dbReference>
<dbReference type="SMR" id="Q98982"/>
<dbReference type="GlyCosmos" id="Q98982">
    <property type="glycosylation" value="4 sites, No reported glycans"/>
</dbReference>
<dbReference type="GO" id="GO:0005886">
    <property type="term" value="C:plasma membrane"/>
    <property type="evidence" value="ECO:0007669"/>
    <property type="project" value="UniProtKB-SubCell"/>
</dbReference>
<dbReference type="GO" id="GO:0097225">
    <property type="term" value="C:sperm midpiece"/>
    <property type="evidence" value="ECO:0007669"/>
    <property type="project" value="TreeGrafter"/>
</dbReference>
<dbReference type="GO" id="GO:0016496">
    <property type="term" value="F:substance P receptor activity"/>
    <property type="evidence" value="ECO:0007669"/>
    <property type="project" value="TreeGrafter"/>
</dbReference>
<dbReference type="GO" id="GO:1902093">
    <property type="term" value="P:positive regulation of flagellated sperm motility"/>
    <property type="evidence" value="ECO:0007669"/>
    <property type="project" value="TreeGrafter"/>
</dbReference>
<dbReference type="CDD" id="cd16002">
    <property type="entry name" value="7tmA_NK1R"/>
    <property type="match status" value="1"/>
</dbReference>
<dbReference type="FunFam" id="1.20.1070.10:FF:000078">
    <property type="entry name" value="Neuromedin-K receptor"/>
    <property type="match status" value="1"/>
</dbReference>
<dbReference type="Gene3D" id="1.20.1070.10">
    <property type="entry name" value="Rhodopsin 7-helix transmembrane proteins"/>
    <property type="match status" value="1"/>
</dbReference>
<dbReference type="InterPro" id="IPR000276">
    <property type="entry name" value="GPCR_Rhodpsn"/>
</dbReference>
<dbReference type="InterPro" id="IPR017452">
    <property type="entry name" value="GPCR_Rhodpsn_7TM"/>
</dbReference>
<dbReference type="InterPro" id="IPR001681">
    <property type="entry name" value="Neurokn_rcpt"/>
</dbReference>
<dbReference type="InterPro" id="IPR000046">
    <property type="entry name" value="NK1_rcpt"/>
</dbReference>
<dbReference type="PANTHER" id="PTHR46925">
    <property type="entry name" value="G-PROTEIN COUPLED RECEPTOR TKR-1-RELATED"/>
    <property type="match status" value="1"/>
</dbReference>
<dbReference type="PANTHER" id="PTHR46925:SF4">
    <property type="entry name" value="SUBSTANCE-P RECEPTOR"/>
    <property type="match status" value="1"/>
</dbReference>
<dbReference type="Pfam" id="PF00001">
    <property type="entry name" value="7tm_1"/>
    <property type="match status" value="1"/>
</dbReference>
<dbReference type="PRINTS" id="PR00237">
    <property type="entry name" value="GPCRRHODOPSN"/>
</dbReference>
<dbReference type="PRINTS" id="PR01024">
    <property type="entry name" value="NEUROKININ1R"/>
</dbReference>
<dbReference type="PRINTS" id="PR00244">
    <property type="entry name" value="NEUROKININR"/>
</dbReference>
<dbReference type="SUPFAM" id="SSF81321">
    <property type="entry name" value="Family A G protein-coupled receptor-like"/>
    <property type="match status" value="1"/>
</dbReference>
<dbReference type="PROSITE" id="PS00237">
    <property type="entry name" value="G_PROTEIN_RECEP_F1_1"/>
    <property type="match status" value="1"/>
</dbReference>
<dbReference type="PROSITE" id="PS50262">
    <property type="entry name" value="G_PROTEIN_RECEP_F1_2"/>
    <property type="match status" value="1"/>
</dbReference>
<keyword id="KW-1003">Cell membrane</keyword>
<keyword id="KW-1015">Disulfide bond</keyword>
<keyword id="KW-0297">G-protein coupled receptor</keyword>
<keyword id="KW-0325">Glycoprotein</keyword>
<keyword id="KW-0449">Lipoprotein</keyword>
<keyword id="KW-0472">Membrane</keyword>
<keyword id="KW-0564">Palmitate</keyword>
<keyword id="KW-0597">Phosphoprotein</keyword>
<keyword id="KW-0675">Receptor</keyword>
<keyword id="KW-0807">Transducer</keyword>
<keyword id="KW-0812">Transmembrane</keyword>
<keyword id="KW-1133">Transmembrane helix</keyword>
<proteinExistence type="evidence at transcript level"/>
<reference key="1">
    <citation type="journal article" date="1997" name="Neuroscience">
        <title>Molecular characterization and functional expression of a substance P receptor from the sympathetic ganglion of Rana catesbeiana.</title>
        <authorList>
            <person name="Simmons M.A."/>
            <person name="Brodbeck R.M."/>
            <person name="Karpitskiy V.V."/>
            <person name="Schneider C.R."/>
            <person name="Neff D.P.A."/>
            <person name="Krause J.E."/>
        </authorList>
    </citation>
    <scope>NUCLEOTIDE SEQUENCE [MRNA]</scope>
    <source>
        <tissue>Sympathetic ganglion</tissue>
    </source>
</reference>
<gene>
    <name type="primary">TACR1</name>
    <name type="synonym">TAC1R</name>
</gene>
<organism>
    <name type="scientific">Aquarana catesbeiana</name>
    <name type="common">American bullfrog</name>
    <name type="synonym">Rana catesbeiana</name>
    <dbReference type="NCBI Taxonomy" id="8400"/>
    <lineage>
        <taxon>Eukaryota</taxon>
        <taxon>Metazoa</taxon>
        <taxon>Chordata</taxon>
        <taxon>Craniata</taxon>
        <taxon>Vertebrata</taxon>
        <taxon>Euteleostomi</taxon>
        <taxon>Amphibia</taxon>
        <taxon>Batrachia</taxon>
        <taxon>Anura</taxon>
        <taxon>Neobatrachia</taxon>
        <taxon>Ranoidea</taxon>
        <taxon>Ranidae</taxon>
        <taxon>Aquarana</taxon>
    </lineage>
</organism>
<evidence type="ECO:0000255" key="1"/>
<evidence type="ECO:0000255" key="2">
    <source>
        <dbReference type="PROSITE-ProRule" id="PRU00521"/>
    </source>
</evidence>
<evidence type="ECO:0000256" key="3">
    <source>
        <dbReference type="SAM" id="MobiDB-lite"/>
    </source>
</evidence>
<protein>
    <recommendedName>
        <fullName>Substance-P receptor</fullName>
        <shortName>SPR</shortName>
    </recommendedName>
    <alternativeName>
        <fullName>NK-1 receptor</fullName>
        <shortName>NK-1R</shortName>
    </alternativeName>
    <alternativeName>
        <fullName>Tachykinin receptor 1</fullName>
    </alternativeName>
</protein>